<dbReference type="EC" id="1.1.1.86" evidence="1"/>
<dbReference type="EMBL" id="AL954747">
    <property type="protein sequence ID" value="CAD85234.1"/>
    <property type="molecule type" value="Genomic_DNA"/>
</dbReference>
<dbReference type="RefSeq" id="WP_011111901.1">
    <property type="nucleotide sequence ID" value="NC_004757.1"/>
</dbReference>
<dbReference type="SMR" id="Q82UZ3"/>
<dbReference type="STRING" id="228410.NE1323"/>
<dbReference type="GeneID" id="87104499"/>
<dbReference type="KEGG" id="neu:NE1323"/>
<dbReference type="eggNOG" id="COG0059">
    <property type="taxonomic scope" value="Bacteria"/>
</dbReference>
<dbReference type="HOGENOM" id="CLU_033821_0_1_4"/>
<dbReference type="OrthoDB" id="9804088at2"/>
<dbReference type="PhylomeDB" id="Q82UZ3"/>
<dbReference type="UniPathway" id="UPA00047">
    <property type="reaction ID" value="UER00056"/>
</dbReference>
<dbReference type="UniPathway" id="UPA00049">
    <property type="reaction ID" value="UER00060"/>
</dbReference>
<dbReference type="Proteomes" id="UP000001416">
    <property type="component" value="Chromosome"/>
</dbReference>
<dbReference type="GO" id="GO:0005829">
    <property type="term" value="C:cytosol"/>
    <property type="evidence" value="ECO:0007669"/>
    <property type="project" value="TreeGrafter"/>
</dbReference>
<dbReference type="GO" id="GO:0004455">
    <property type="term" value="F:ketol-acid reductoisomerase activity"/>
    <property type="evidence" value="ECO:0007669"/>
    <property type="project" value="UniProtKB-UniRule"/>
</dbReference>
<dbReference type="GO" id="GO:0000287">
    <property type="term" value="F:magnesium ion binding"/>
    <property type="evidence" value="ECO:0007669"/>
    <property type="project" value="UniProtKB-UniRule"/>
</dbReference>
<dbReference type="GO" id="GO:0050661">
    <property type="term" value="F:NADP binding"/>
    <property type="evidence" value="ECO:0007669"/>
    <property type="project" value="InterPro"/>
</dbReference>
<dbReference type="GO" id="GO:0009097">
    <property type="term" value="P:isoleucine biosynthetic process"/>
    <property type="evidence" value="ECO:0007669"/>
    <property type="project" value="UniProtKB-UniRule"/>
</dbReference>
<dbReference type="GO" id="GO:0009099">
    <property type="term" value="P:L-valine biosynthetic process"/>
    <property type="evidence" value="ECO:0007669"/>
    <property type="project" value="UniProtKB-UniRule"/>
</dbReference>
<dbReference type="FunFam" id="3.40.50.720:FF:000023">
    <property type="entry name" value="Ketol-acid reductoisomerase (NADP(+))"/>
    <property type="match status" value="1"/>
</dbReference>
<dbReference type="Gene3D" id="6.10.240.10">
    <property type="match status" value="1"/>
</dbReference>
<dbReference type="Gene3D" id="3.40.50.720">
    <property type="entry name" value="NAD(P)-binding Rossmann-like Domain"/>
    <property type="match status" value="1"/>
</dbReference>
<dbReference type="HAMAP" id="MF_00435">
    <property type="entry name" value="IlvC"/>
    <property type="match status" value="1"/>
</dbReference>
<dbReference type="InterPro" id="IPR008927">
    <property type="entry name" value="6-PGluconate_DH-like_C_sf"/>
</dbReference>
<dbReference type="InterPro" id="IPR013023">
    <property type="entry name" value="KARI"/>
</dbReference>
<dbReference type="InterPro" id="IPR000506">
    <property type="entry name" value="KARI_C"/>
</dbReference>
<dbReference type="InterPro" id="IPR013116">
    <property type="entry name" value="KARI_N"/>
</dbReference>
<dbReference type="InterPro" id="IPR014359">
    <property type="entry name" value="KARI_prok"/>
</dbReference>
<dbReference type="InterPro" id="IPR036291">
    <property type="entry name" value="NAD(P)-bd_dom_sf"/>
</dbReference>
<dbReference type="NCBIfam" id="TIGR00465">
    <property type="entry name" value="ilvC"/>
    <property type="match status" value="1"/>
</dbReference>
<dbReference type="NCBIfam" id="NF004017">
    <property type="entry name" value="PRK05479.1"/>
    <property type="match status" value="1"/>
</dbReference>
<dbReference type="NCBIfam" id="NF009940">
    <property type="entry name" value="PRK13403.1"/>
    <property type="match status" value="1"/>
</dbReference>
<dbReference type="PANTHER" id="PTHR21371">
    <property type="entry name" value="KETOL-ACID REDUCTOISOMERASE, MITOCHONDRIAL"/>
    <property type="match status" value="1"/>
</dbReference>
<dbReference type="PANTHER" id="PTHR21371:SF1">
    <property type="entry name" value="KETOL-ACID REDUCTOISOMERASE, MITOCHONDRIAL"/>
    <property type="match status" value="1"/>
</dbReference>
<dbReference type="Pfam" id="PF01450">
    <property type="entry name" value="KARI_C"/>
    <property type="match status" value="1"/>
</dbReference>
<dbReference type="Pfam" id="PF07991">
    <property type="entry name" value="KARI_N"/>
    <property type="match status" value="1"/>
</dbReference>
<dbReference type="PIRSF" id="PIRSF000116">
    <property type="entry name" value="IlvC_gammaproteo"/>
    <property type="match status" value="1"/>
</dbReference>
<dbReference type="SUPFAM" id="SSF48179">
    <property type="entry name" value="6-phosphogluconate dehydrogenase C-terminal domain-like"/>
    <property type="match status" value="1"/>
</dbReference>
<dbReference type="SUPFAM" id="SSF51735">
    <property type="entry name" value="NAD(P)-binding Rossmann-fold domains"/>
    <property type="match status" value="1"/>
</dbReference>
<dbReference type="PROSITE" id="PS51851">
    <property type="entry name" value="KARI_C"/>
    <property type="match status" value="1"/>
</dbReference>
<dbReference type="PROSITE" id="PS51850">
    <property type="entry name" value="KARI_N"/>
    <property type="match status" value="1"/>
</dbReference>
<evidence type="ECO:0000255" key="1">
    <source>
        <dbReference type="HAMAP-Rule" id="MF_00435"/>
    </source>
</evidence>
<evidence type="ECO:0000255" key="2">
    <source>
        <dbReference type="PROSITE-ProRule" id="PRU01197"/>
    </source>
</evidence>
<evidence type="ECO:0000255" key="3">
    <source>
        <dbReference type="PROSITE-ProRule" id="PRU01198"/>
    </source>
</evidence>
<feature type="chain" id="PRO_0000151333" description="Ketol-acid reductoisomerase (NADP(+))">
    <location>
        <begin position="1"/>
        <end position="338"/>
    </location>
</feature>
<feature type="domain" description="KARI N-terminal Rossmann" evidence="2">
    <location>
        <begin position="1"/>
        <end position="181"/>
    </location>
</feature>
<feature type="domain" description="KARI C-terminal knotted" evidence="3">
    <location>
        <begin position="182"/>
        <end position="327"/>
    </location>
</feature>
<feature type="active site" evidence="1">
    <location>
        <position position="107"/>
    </location>
</feature>
<feature type="binding site" evidence="1">
    <location>
        <begin position="24"/>
        <end position="27"/>
    </location>
    <ligand>
        <name>NADP(+)</name>
        <dbReference type="ChEBI" id="CHEBI:58349"/>
    </ligand>
</feature>
<feature type="binding site" evidence="1">
    <location>
        <position position="47"/>
    </location>
    <ligand>
        <name>NADP(+)</name>
        <dbReference type="ChEBI" id="CHEBI:58349"/>
    </ligand>
</feature>
<feature type="binding site" evidence="1">
    <location>
        <position position="52"/>
    </location>
    <ligand>
        <name>NADP(+)</name>
        <dbReference type="ChEBI" id="CHEBI:58349"/>
    </ligand>
</feature>
<feature type="binding site" evidence="1">
    <location>
        <position position="133"/>
    </location>
    <ligand>
        <name>NADP(+)</name>
        <dbReference type="ChEBI" id="CHEBI:58349"/>
    </ligand>
</feature>
<feature type="binding site" evidence="1">
    <location>
        <position position="190"/>
    </location>
    <ligand>
        <name>Mg(2+)</name>
        <dbReference type="ChEBI" id="CHEBI:18420"/>
        <label>1</label>
    </ligand>
</feature>
<feature type="binding site" evidence="1">
    <location>
        <position position="190"/>
    </location>
    <ligand>
        <name>Mg(2+)</name>
        <dbReference type="ChEBI" id="CHEBI:18420"/>
        <label>2</label>
    </ligand>
</feature>
<feature type="binding site" evidence="1">
    <location>
        <position position="194"/>
    </location>
    <ligand>
        <name>Mg(2+)</name>
        <dbReference type="ChEBI" id="CHEBI:18420"/>
        <label>1</label>
    </ligand>
</feature>
<feature type="binding site" evidence="1">
    <location>
        <position position="226"/>
    </location>
    <ligand>
        <name>Mg(2+)</name>
        <dbReference type="ChEBI" id="CHEBI:18420"/>
        <label>2</label>
    </ligand>
</feature>
<feature type="binding site" evidence="1">
    <location>
        <position position="230"/>
    </location>
    <ligand>
        <name>Mg(2+)</name>
        <dbReference type="ChEBI" id="CHEBI:18420"/>
        <label>2</label>
    </ligand>
</feature>
<feature type="binding site" evidence="1">
    <location>
        <position position="251"/>
    </location>
    <ligand>
        <name>substrate</name>
    </ligand>
</feature>
<name>ILVC_NITEU</name>
<accession>Q82UZ3</accession>
<comment type="function">
    <text evidence="1">Involved in the biosynthesis of branched-chain amino acids (BCAA). Catalyzes an alkyl-migration followed by a ketol-acid reduction of (S)-2-acetolactate (S2AL) to yield (R)-2,3-dihydroxy-isovalerate. In the isomerase reaction, S2AL is rearranged via a Mg-dependent methyl migration to produce 3-hydroxy-3-methyl-2-ketobutyrate (HMKB). In the reductase reaction, this 2-ketoacid undergoes a metal-dependent reduction by NADPH to yield (R)-2,3-dihydroxy-isovalerate.</text>
</comment>
<comment type="catalytic activity">
    <reaction evidence="1">
        <text>(2R)-2,3-dihydroxy-3-methylbutanoate + NADP(+) = (2S)-2-acetolactate + NADPH + H(+)</text>
        <dbReference type="Rhea" id="RHEA:22068"/>
        <dbReference type="ChEBI" id="CHEBI:15378"/>
        <dbReference type="ChEBI" id="CHEBI:49072"/>
        <dbReference type="ChEBI" id="CHEBI:57783"/>
        <dbReference type="ChEBI" id="CHEBI:58349"/>
        <dbReference type="ChEBI" id="CHEBI:58476"/>
        <dbReference type="EC" id="1.1.1.86"/>
    </reaction>
</comment>
<comment type="catalytic activity">
    <reaction evidence="1">
        <text>(2R,3R)-2,3-dihydroxy-3-methylpentanoate + NADP(+) = (S)-2-ethyl-2-hydroxy-3-oxobutanoate + NADPH + H(+)</text>
        <dbReference type="Rhea" id="RHEA:13493"/>
        <dbReference type="ChEBI" id="CHEBI:15378"/>
        <dbReference type="ChEBI" id="CHEBI:49256"/>
        <dbReference type="ChEBI" id="CHEBI:49258"/>
        <dbReference type="ChEBI" id="CHEBI:57783"/>
        <dbReference type="ChEBI" id="CHEBI:58349"/>
        <dbReference type="EC" id="1.1.1.86"/>
    </reaction>
</comment>
<comment type="cofactor">
    <cofactor evidence="1">
        <name>Mg(2+)</name>
        <dbReference type="ChEBI" id="CHEBI:18420"/>
    </cofactor>
    <text evidence="1">Binds 2 magnesium ions per subunit.</text>
</comment>
<comment type="pathway">
    <text evidence="1">Amino-acid biosynthesis; L-isoleucine biosynthesis; L-isoleucine from 2-oxobutanoate: step 2/4.</text>
</comment>
<comment type="pathway">
    <text evidence="1">Amino-acid biosynthesis; L-valine biosynthesis; L-valine from pyruvate: step 2/4.</text>
</comment>
<comment type="similarity">
    <text evidence="1">Belongs to the ketol-acid reductoisomerase family.</text>
</comment>
<sequence>MKVYYDKDADLSLIKKKKVAIIGYGSQGHAHANNLNDSGVKVTIGLRKGGASWDKAKKAGLTVKEVGAAVKDADVIMLLLPDEQMASVYQTEVEPVLKKNATLAFAHGFNVHYGQIIPREDLDVIMVAPKGPGHLVRSTYTQGGGVPSLIAVHQDKSGKARDLALSYAAANGGTRGGVIETTFKEETETDLFGEQVVLCGGLTSLIQAGFETLVEAGYAPEMAYFECLHEVKLIVDLIYEGGIANMRYSVSNNAEYGDVSRGPRIITDATRNEMRKILREIQTGEYAREFILENRAGAPVLKSSRRLASEHPIETVGAKLRDMMPWISKNKLVDQAKN</sequence>
<keyword id="KW-0028">Amino-acid biosynthesis</keyword>
<keyword id="KW-0100">Branched-chain amino acid biosynthesis</keyword>
<keyword id="KW-0460">Magnesium</keyword>
<keyword id="KW-0479">Metal-binding</keyword>
<keyword id="KW-0521">NADP</keyword>
<keyword id="KW-0560">Oxidoreductase</keyword>
<keyword id="KW-1185">Reference proteome</keyword>
<reference key="1">
    <citation type="journal article" date="2003" name="J. Bacteriol.">
        <title>Complete genome sequence of the ammonia-oxidizing bacterium and obligate chemolithoautotroph Nitrosomonas europaea.</title>
        <authorList>
            <person name="Chain P."/>
            <person name="Lamerdin J.E."/>
            <person name="Larimer F.W."/>
            <person name="Regala W."/>
            <person name="Lao V."/>
            <person name="Land M.L."/>
            <person name="Hauser L."/>
            <person name="Hooper A.B."/>
            <person name="Klotz M.G."/>
            <person name="Norton J."/>
            <person name="Sayavedra-Soto L.A."/>
            <person name="Arciero D.M."/>
            <person name="Hommes N.G."/>
            <person name="Whittaker M.M."/>
            <person name="Arp D.J."/>
        </authorList>
    </citation>
    <scope>NUCLEOTIDE SEQUENCE [LARGE SCALE GENOMIC DNA]</scope>
    <source>
        <strain>ATCC 19718 / CIP 103999 / KCTC 2705 / NBRC 14298</strain>
    </source>
</reference>
<gene>
    <name evidence="1" type="primary">ilvC</name>
    <name type="ordered locus">NE1323</name>
</gene>
<organism>
    <name type="scientific">Nitrosomonas europaea (strain ATCC 19718 / CIP 103999 / KCTC 2705 / NBRC 14298)</name>
    <dbReference type="NCBI Taxonomy" id="228410"/>
    <lineage>
        <taxon>Bacteria</taxon>
        <taxon>Pseudomonadati</taxon>
        <taxon>Pseudomonadota</taxon>
        <taxon>Betaproteobacteria</taxon>
        <taxon>Nitrosomonadales</taxon>
        <taxon>Nitrosomonadaceae</taxon>
        <taxon>Nitrosomonas</taxon>
    </lineage>
</organism>
<protein>
    <recommendedName>
        <fullName evidence="1">Ketol-acid reductoisomerase (NADP(+))</fullName>
        <shortName evidence="1">KARI</shortName>
        <ecNumber evidence="1">1.1.1.86</ecNumber>
    </recommendedName>
    <alternativeName>
        <fullName evidence="1">Acetohydroxy-acid isomeroreductase</fullName>
        <shortName evidence="1">AHIR</shortName>
    </alternativeName>
    <alternativeName>
        <fullName evidence="1">Alpha-keto-beta-hydroxylacyl reductoisomerase</fullName>
    </alternativeName>
    <alternativeName>
        <fullName evidence="1">Ketol-acid reductoisomerase type 1</fullName>
    </alternativeName>
    <alternativeName>
        <fullName evidence="1">Ketol-acid reductoisomerase type I</fullName>
    </alternativeName>
</protein>
<proteinExistence type="inferred from homology"/>